<protein>
    <recommendedName>
        <fullName evidence="1">Lon protease</fullName>
        <ecNumber evidence="1">3.4.21.53</ecNumber>
    </recommendedName>
    <alternativeName>
        <fullName evidence="1">ATP-dependent protease La</fullName>
    </alternativeName>
</protein>
<sequence length="812" mass="89795">MTGIEQKTPVGGSETGGADGLYAVLPLRDIVVFPHMIVPLFVGREKSIRALEEVMGVDKQILLATQKNAADDDPAPDAIYEIGTIANVLQLLKLPDGTVKVLVEGTARAKISKFTDREDYHEAYAAALQEPEEDAVEIEALARSVVSDFENYVKLNKKISPEVVGAASQIDDYSKLADTVASHLAIKIPEKQEMLSVLSVRERLEKALSFMEAEISVLQVEKRIRSRVKRQMEKTQREYYLNEQMKAIQKELGDSEDGRDEVAEIEERITKTKLSKEAREKALAELKKLRSMSPMSAEATVVRNYLDWLLSIPWGKKSKVKQDLNFAQEVLDAEHFGLGKVKERIVGYLAVQARSTKIKGPILCLVGPPGVGKTSLARSIAKATGREYVRMSLGGVRDEAEIRGHRRTYIGSMPGKVIQSMKKAKKSNPLFLLDEIDKMGQDFRGDPSSAMLEVLDPEQNATFMDHYLEVEYDLSNVMFVTTANTMNIPGPLLDRMEIIRIAGYTEDEKLEIAKRHLLPKAIKDHALQPKEFSVTEDALRNVIRHYTREAGVRSLEREVMTLARKAVTEILKTKKKSVKITDKNLSDYLGVEKFRFGQIDGEDQVGVVTGLAWTEVGGELLTIEGVMMPGKGRMTVTGNLRDVMKESISAAASYVRSRAIDFGIEPPLFDKRDIHVHVPEGATPKDGPSAGIAMVTAIVSVLTGIPVRKDIAMTGEVTLRGRVLPIGGLKEKLLAALRGGIKKVLIPEENAKDLAEIPDNVKNNLEIVPVSRVGEVLKHTLVRQPEPIEWTEQENPTAVPPVEDEAGASLAH</sequence>
<name>LON_BRUSU</name>
<organism>
    <name type="scientific">Brucella suis biovar 1 (strain 1330)</name>
    <dbReference type="NCBI Taxonomy" id="204722"/>
    <lineage>
        <taxon>Bacteria</taxon>
        <taxon>Pseudomonadati</taxon>
        <taxon>Pseudomonadota</taxon>
        <taxon>Alphaproteobacteria</taxon>
        <taxon>Hyphomicrobiales</taxon>
        <taxon>Brucellaceae</taxon>
        <taxon>Brucella/Ochrobactrum group</taxon>
        <taxon>Brucella</taxon>
    </lineage>
</organism>
<dbReference type="EC" id="3.4.21.53" evidence="1"/>
<dbReference type="EMBL" id="AE014291">
    <property type="protein sequence ID" value="AAN30026.1"/>
    <property type="molecule type" value="Genomic_DNA"/>
</dbReference>
<dbReference type="EMBL" id="CP002997">
    <property type="protein sequence ID" value="AEM18444.1"/>
    <property type="molecule type" value="Genomic_DNA"/>
</dbReference>
<dbReference type="RefSeq" id="WP_006190456.1">
    <property type="nucleotide sequence ID" value="NZ_KN046804.1"/>
</dbReference>
<dbReference type="SMR" id="Q8G0I7"/>
<dbReference type="MEROPS" id="S16.001"/>
<dbReference type="GeneID" id="45052152"/>
<dbReference type="KEGG" id="bms:BR1106"/>
<dbReference type="KEGG" id="bsi:BS1330_I1102"/>
<dbReference type="PATRIC" id="fig|204722.22.peg.739"/>
<dbReference type="HOGENOM" id="CLU_004109_4_3_5"/>
<dbReference type="PhylomeDB" id="Q8G0I7"/>
<dbReference type="PRO" id="PR:Q8G0I7"/>
<dbReference type="Proteomes" id="UP000007104">
    <property type="component" value="Chromosome I"/>
</dbReference>
<dbReference type="GO" id="GO:0005737">
    <property type="term" value="C:cytoplasm"/>
    <property type="evidence" value="ECO:0007669"/>
    <property type="project" value="UniProtKB-SubCell"/>
</dbReference>
<dbReference type="GO" id="GO:0005524">
    <property type="term" value="F:ATP binding"/>
    <property type="evidence" value="ECO:0007669"/>
    <property type="project" value="UniProtKB-UniRule"/>
</dbReference>
<dbReference type="GO" id="GO:0016887">
    <property type="term" value="F:ATP hydrolysis activity"/>
    <property type="evidence" value="ECO:0007669"/>
    <property type="project" value="UniProtKB-UniRule"/>
</dbReference>
<dbReference type="GO" id="GO:0004176">
    <property type="term" value="F:ATP-dependent peptidase activity"/>
    <property type="evidence" value="ECO:0007669"/>
    <property type="project" value="UniProtKB-UniRule"/>
</dbReference>
<dbReference type="GO" id="GO:0043565">
    <property type="term" value="F:sequence-specific DNA binding"/>
    <property type="evidence" value="ECO:0007669"/>
    <property type="project" value="UniProtKB-UniRule"/>
</dbReference>
<dbReference type="GO" id="GO:0004252">
    <property type="term" value="F:serine-type endopeptidase activity"/>
    <property type="evidence" value="ECO:0007669"/>
    <property type="project" value="UniProtKB-UniRule"/>
</dbReference>
<dbReference type="GO" id="GO:0034605">
    <property type="term" value="P:cellular response to heat"/>
    <property type="evidence" value="ECO:0007669"/>
    <property type="project" value="UniProtKB-UniRule"/>
</dbReference>
<dbReference type="GO" id="GO:0006515">
    <property type="term" value="P:protein quality control for misfolded or incompletely synthesized proteins"/>
    <property type="evidence" value="ECO:0007669"/>
    <property type="project" value="UniProtKB-UniRule"/>
</dbReference>
<dbReference type="CDD" id="cd19500">
    <property type="entry name" value="RecA-like_Lon"/>
    <property type="match status" value="1"/>
</dbReference>
<dbReference type="FunFam" id="3.30.230.10:FF:000010">
    <property type="entry name" value="Lon protease"/>
    <property type="match status" value="1"/>
</dbReference>
<dbReference type="FunFam" id="1.20.5.5270:FF:000002">
    <property type="entry name" value="Lon protease homolog"/>
    <property type="match status" value="1"/>
</dbReference>
<dbReference type="FunFam" id="3.40.50.300:FF:000021">
    <property type="entry name" value="Lon protease homolog"/>
    <property type="match status" value="1"/>
</dbReference>
<dbReference type="Gene3D" id="1.10.8.60">
    <property type="match status" value="1"/>
</dbReference>
<dbReference type="Gene3D" id="1.20.5.5270">
    <property type="match status" value="1"/>
</dbReference>
<dbReference type="Gene3D" id="1.20.58.1480">
    <property type="match status" value="1"/>
</dbReference>
<dbReference type="Gene3D" id="3.30.230.10">
    <property type="match status" value="1"/>
</dbReference>
<dbReference type="Gene3D" id="2.30.130.40">
    <property type="entry name" value="LON domain-like"/>
    <property type="match status" value="1"/>
</dbReference>
<dbReference type="Gene3D" id="3.40.50.300">
    <property type="entry name" value="P-loop containing nucleotide triphosphate hydrolases"/>
    <property type="match status" value="1"/>
</dbReference>
<dbReference type="HAMAP" id="MF_01973">
    <property type="entry name" value="lon_bact"/>
    <property type="match status" value="1"/>
</dbReference>
<dbReference type="InterPro" id="IPR003593">
    <property type="entry name" value="AAA+_ATPase"/>
</dbReference>
<dbReference type="InterPro" id="IPR003959">
    <property type="entry name" value="ATPase_AAA_core"/>
</dbReference>
<dbReference type="InterPro" id="IPR027543">
    <property type="entry name" value="Lon_bac"/>
</dbReference>
<dbReference type="InterPro" id="IPR004815">
    <property type="entry name" value="Lon_bac/euk-typ"/>
</dbReference>
<dbReference type="InterPro" id="IPR054594">
    <property type="entry name" value="Lon_lid"/>
</dbReference>
<dbReference type="InterPro" id="IPR008269">
    <property type="entry name" value="Lon_proteolytic"/>
</dbReference>
<dbReference type="InterPro" id="IPR027065">
    <property type="entry name" value="Lon_Prtase"/>
</dbReference>
<dbReference type="InterPro" id="IPR003111">
    <property type="entry name" value="Lon_prtase_N"/>
</dbReference>
<dbReference type="InterPro" id="IPR046336">
    <property type="entry name" value="Lon_prtase_N_sf"/>
</dbReference>
<dbReference type="InterPro" id="IPR027417">
    <property type="entry name" value="P-loop_NTPase"/>
</dbReference>
<dbReference type="InterPro" id="IPR008268">
    <property type="entry name" value="Peptidase_S16_AS"/>
</dbReference>
<dbReference type="InterPro" id="IPR015947">
    <property type="entry name" value="PUA-like_sf"/>
</dbReference>
<dbReference type="InterPro" id="IPR020568">
    <property type="entry name" value="Ribosomal_Su5_D2-typ_SF"/>
</dbReference>
<dbReference type="InterPro" id="IPR014721">
    <property type="entry name" value="Ribsml_uS5_D2-typ_fold_subgr"/>
</dbReference>
<dbReference type="NCBIfam" id="TIGR00763">
    <property type="entry name" value="lon"/>
    <property type="match status" value="1"/>
</dbReference>
<dbReference type="NCBIfam" id="NF008053">
    <property type="entry name" value="PRK10787.1"/>
    <property type="match status" value="1"/>
</dbReference>
<dbReference type="PANTHER" id="PTHR10046">
    <property type="entry name" value="ATP DEPENDENT LON PROTEASE FAMILY MEMBER"/>
    <property type="match status" value="1"/>
</dbReference>
<dbReference type="Pfam" id="PF00004">
    <property type="entry name" value="AAA"/>
    <property type="match status" value="1"/>
</dbReference>
<dbReference type="Pfam" id="PF05362">
    <property type="entry name" value="Lon_C"/>
    <property type="match status" value="1"/>
</dbReference>
<dbReference type="Pfam" id="PF22667">
    <property type="entry name" value="Lon_lid"/>
    <property type="match status" value="1"/>
</dbReference>
<dbReference type="Pfam" id="PF02190">
    <property type="entry name" value="LON_substr_bdg"/>
    <property type="match status" value="1"/>
</dbReference>
<dbReference type="PIRSF" id="PIRSF001174">
    <property type="entry name" value="Lon_proteas"/>
    <property type="match status" value="1"/>
</dbReference>
<dbReference type="PRINTS" id="PR00830">
    <property type="entry name" value="ENDOLAPTASE"/>
</dbReference>
<dbReference type="SMART" id="SM00382">
    <property type="entry name" value="AAA"/>
    <property type="match status" value="1"/>
</dbReference>
<dbReference type="SMART" id="SM00464">
    <property type="entry name" value="LON"/>
    <property type="match status" value="1"/>
</dbReference>
<dbReference type="SUPFAM" id="SSF52540">
    <property type="entry name" value="P-loop containing nucleoside triphosphate hydrolases"/>
    <property type="match status" value="1"/>
</dbReference>
<dbReference type="SUPFAM" id="SSF88697">
    <property type="entry name" value="PUA domain-like"/>
    <property type="match status" value="1"/>
</dbReference>
<dbReference type="SUPFAM" id="SSF54211">
    <property type="entry name" value="Ribosomal protein S5 domain 2-like"/>
    <property type="match status" value="1"/>
</dbReference>
<dbReference type="PROSITE" id="PS51787">
    <property type="entry name" value="LON_N"/>
    <property type="match status" value="1"/>
</dbReference>
<dbReference type="PROSITE" id="PS51786">
    <property type="entry name" value="LON_PROTEOLYTIC"/>
    <property type="match status" value="1"/>
</dbReference>
<dbReference type="PROSITE" id="PS01046">
    <property type="entry name" value="LON_SER"/>
    <property type="match status" value="1"/>
</dbReference>
<comment type="function">
    <text evidence="1">ATP-dependent serine protease that mediates the selective degradation of mutant and abnormal proteins as well as certain short-lived regulatory proteins. Required for cellular homeostasis and for survival from DNA damage and developmental changes induced by stress. Degrades polypeptides processively to yield small peptide fragments that are 5 to 10 amino acids long. Binds to DNA in a double-stranded, site-specific manner.</text>
</comment>
<comment type="catalytic activity">
    <reaction evidence="1">
        <text>Hydrolysis of proteins in presence of ATP.</text>
        <dbReference type="EC" id="3.4.21.53"/>
    </reaction>
</comment>
<comment type="subunit">
    <text evidence="1">Homohexamer. Organized in a ring with a central cavity.</text>
</comment>
<comment type="subcellular location">
    <subcellularLocation>
        <location evidence="1">Cytoplasm</location>
    </subcellularLocation>
</comment>
<comment type="induction">
    <text evidence="1">By heat shock.</text>
</comment>
<comment type="similarity">
    <text evidence="1">Belongs to the peptidase S16 family.</text>
</comment>
<gene>
    <name evidence="1" type="primary">lon</name>
    <name type="ordered locus">BR1106</name>
    <name type="ordered locus">BS1330_I1102</name>
</gene>
<evidence type="ECO:0000255" key="1">
    <source>
        <dbReference type="HAMAP-Rule" id="MF_01973"/>
    </source>
</evidence>
<evidence type="ECO:0000255" key="2">
    <source>
        <dbReference type="PROSITE-ProRule" id="PRU01122"/>
    </source>
</evidence>
<evidence type="ECO:0000255" key="3">
    <source>
        <dbReference type="PROSITE-ProRule" id="PRU01123"/>
    </source>
</evidence>
<evidence type="ECO:0000256" key="4">
    <source>
        <dbReference type="SAM" id="MobiDB-lite"/>
    </source>
</evidence>
<keyword id="KW-0067">ATP-binding</keyword>
<keyword id="KW-0963">Cytoplasm</keyword>
<keyword id="KW-0378">Hydrolase</keyword>
<keyword id="KW-0547">Nucleotide-binding</keyword>
<keyword id="KW-0645">Protease</keyword>
<keyword id="KW-0720">Serine protease</keyword>
<keyword id="KW-0346">Stress response</keyword>
<proteinExistence type="inferred from homology"/>
<accession>Q8G0I7</accession>
<accession>G0KA28</accession>
<reference key="1">
    <citation type="journal article" date="2002" name="Proc. Natl. Acad. Sci. U.S.A.">
        <title>The Brucella suis genome reveals fundamental similarities between animal and plant pathogens and symbionts.</title>
        <authorList>
            <person name="Paulsen I.T."/>
            <person name="Seshadri R."/>
            <person name="Nelson K.E."/>
            <person name="Eisen J.A."/>
            <person name="Heidelberg J.F."/>
            <person name="Read T.D."/>
            <person name="Dodson R.J."/>
            <person name="Umayam L.A."/>
            <person name="Brinkac L.M."/>
            <person name="Beanan M.J."/>
            <person name="Daugherty S.C."/>
            <person name="DeBoy R.T."/>
            <person name="Durkin A.S."/>
            <person name="Kolonay J.F."/>
            <person name="Madupu R."/>
            <person name="Nelson W.C."/>
            <person name="Ayodeji B."/>
            <person name="Kraul M."/>
            <person name="Shetty J."/>
            <person name="Malek J.A."/>
            <person name="Van Aken S.E."/>
            <person name="Riedmuller S."/>
            <person name="Tettelin H."/>
            <person name="Gill S.R."/>
            <person name="White O."/>
            <person name="Salzberg S.L."/>
            <person name="Hoover D.L."/>
            <person name="Lindler L.E."/>
            <person name="Halling S.M."/>
            <person name="Boyle S.M."/>
            <person name="Fraser C.M."/>
        </authorList>
    </citation>
    <scope>NUCLEOTIDE SEQUENCE [LARGE SCALE GENOMIC DNA]</scope>
    <source>
        <strain>1330</strain>
    </source>
</reference>
<reference key="2">
    <citation type="journal article" date="2011" name="J. Bacteriol.">
        <title>Revised genome sequence of Brucella suis 1330.</title>
        <authorList>
            <person name="Tae H."/>
            <person name="Shallom S."/>
            <person name="Settlage R."/>
            <person name="Preston D."/>
            <person name="Adams L.G."/>
            <person name="Garner H.R."/>
        </authorList>
    </citation>
    <scope>NUCLEOTIDE SEQUENCE [LARGE SCALE GENOMIC DNA]</scope>
    <source>
        <strain>1330</strain>
    </source>
</reference>
<feature type="chain" id="PRO_0000076124" description="Lon protease">
    <location>
        <begin position="1"/>
        <end position="812"/>
    </location>
</feature>
<feature type="domain" description="Lon N-terminal" evidence="3">
    <location>
        <begin position="22"/>
        <end position="215"/>
    </location>
</feature>
<feature type="domain" description="Lon proteolytic" evidence="2">
    <location>
        <begin position="602"/>
        <end position="783"/>
    </location>
</feature>
<feature type="region of interest" description="Disordered" evidence="4">
    <location>
        <begin position="787"/>
        <end position="812"/>
    </location>
</feature>
<feature type="active site" evidence="1">
    <location>
        <position position="689"/>
    </location>
</feature>
<feature type="active site" evidence="1">
    <location>
        <position position="732"/>
    </location>
</feature>
<feature type="binding site" evidence="1">
    <location>
        <begin position="367"/>
        <end position="374"/>
    </location>
    <ligand>
        <name>ATP</name>
        <dbReference type="ChEBI" id="CHEBI:30616"/>
    </ligand>
</feature>